<sequence>MFMTYQPKKRQRSKEHGFRKRMKTKSGRNVLKRRRQKGRKRLTA</sequence>
<reference key="1">
    <citation type="journal article" date="2006" name="Genome Res.">
        <title>Skewed genomic variability in strains of the toxigenic bacterial pathogen, Clostridium perfringens.</title>
        <authorList>
            <person name="Myers G.S.A."/>
            <person name="Rasko D.A."/>
            <person name="Cheung J.K."/>
            <person name="Ravel J."/>
            <person name="Seshadri R."/>
            <person name="DeBoy R.T."/>
            <person name="Ren Q."/>
            <person name="Varga J."/>
            <person name="Awad M.M."/>
            <person name="Brinkac L.M."/>
            <person name="Daugherty S.C."/>
            <person name="Haft D.H."/>
            <person name="Dodson R.J."/>
            <person name="Madupu R."/>
            <person name="Nelson W.C."/>
            <person name="Rosovitz M.J."/>
            <person name="Sullivan S.A."/>
            <person name="Khouri H."/>
            <person name="Dimitrov G.I."/>
            <person name="Watkins K.L."/>
            <person name="Mulligan S."/>
            <person name="Benton J."/>
            <person name="Radune D."/>
            <person name="Fisher D.J."/>
            <person name="Atkins H.S."/>
            <person name="Hiscox T."/>
            <person name="Jost B.H."/>
            <person name="Billington S.J."/>
            <person name="Songer J.G."/>
            <person name="McClane B.A."/>
            <person name="Titball R.W."/>
            <person name="Rood J.I."/>
            <person name="Melville S.B."/>
            <person name="Paulsen I.T."/>
        </authorList>
    </citation>
    <scope>NUCLEOTIDE SEQUENCE [LARGE SCALE GENOMIC DNA]</scope>
    <source>
        <strain>SM101 / Type A</strain>
    </source>
</reference>
<organism>
    <name type="scientific">Clostridium perfringens (strain SM101 / Type A)</name>
    <dbReference type="NCBI Taxonomy" id="289380"/>
    <lineage>
        <taxon>Bacteria</taxon>
        <taxon>Bacillati</taxon>
        <taxon>Bacillota</taxon>
        <taxon>Clostridia</taxon>
        <taxon>Eubacteriales</taxon>
        <taxon>Clostridiaceae</taxon>
        <taxon>Clostridium</taxon>
    </lineage>
</organism>
<proteinExistence type="inferred from homology"/>
<feature type="chain" id="PRO_1000013323" description="Large ribosomal subunit protein bL34">
    <location>
        <begin position="1"/>
        <end position="44"/>
    </location>
</feature>
<feature type="region of interest" description="Disordered" evidence="2">
    <location>
        <begin position="1"/>
        <end position="44"/>
    </location>
</feature>
<feature type="compositionally biased region" description="Basic residues" evidence="2">
    <location>
        <begin position="7"/>
        <end position="44"/>
    </location>
</feature>
<comment type="similarity">
    <text evidence="1">Belongs to the bacterial ribosomal protein bL34 family.</text>
</comment>
<name>RL34_CLOPS</name>
<accession>Q0SPP8</accession>
<gene>
    <name evidence="1" type="primary">rpmH</name>
    <name type="ordered locus">CPR_2674</name>
</gene>
<evidence type="ECO:0000255" key="1">
    <source>
        <dbReference type="HAMAP-Rule" id="MF_00391"/>
    </source>
</evidence>
<evidence type="ECO:0000256" key="2">
    <source>
        <dbReference type="SAM" id="MobiDB-lite"/>
    </source>
</evidence>
<evidence type="ECO:0000305" key="3"/>
<keyword id="KW-0687">Ribonucleoprotein</keyword>
<keyword id="KW-0689">Ribosomal protein</keyword>
<dbReference type="EMBL" id="CP000312">
    <property type="protein sequence ID" value="ABG85872.1"/>
    <property type="molecule type" value="Genomic_DNA"/>
</dbReference>
<dbReference type="RefSeq" id="WP_003451019.1">
    <property type="nucleotide sequence ID" value="NZ_CAXVKH010000018.1"/>
</dbReference>
<dbReference type="SMR" id="Q0SPP8"/>
<dbReference type="GeneID" id="93000725"/>
<dbReference type="KEGG" id="cpr:CPR_2674"/>
<dbReference type="Proteomes" id="UP000001824">
    <property type="component" value="Chromosome"/>
</dbReference>
<dbReference type="GO" id="GO:1990904">
    <property type="term" value="C:ribonucleoprotein complex"/>
    <property type="evidence" value="ECO:0007669"/>
    <property type="project" value="UniProtKB-KW"/>
</dbReference>
<dbReference type="GO" id="GO:0005840">
    <property type="term" value="C:ribosome"/>
    <property type="evidence" value="ECO:0007669"/>
    <property type="project" value="UniProtKB-KW"/>
</dbReference>
<dbReference type="GO" id="GO:0003735">
    <property type="term" value="F:structural constituent of ribosome"/>
    <property type="evidence" value="ECO:0007669"/>
    <property type="project" value="InterPro"/>
</dbReference>
<dbReference type="GO" id="GO:0006412">
    <property type="term" value="P:translation"/>
    <property type="evidence" value="ECO:0007669"/>
    <property type="project" value="UniProtKB-UniRule"/>
</dbReference>
<dbReference type="FunFam" id="1.10.287.3980:FF:000001">
    <property type="entry name" value="Mitochondrial ribosomal protein L34"/>
    <property type="match status" value="1"/>
</dbReference>
<dbReference type="Gene3D" id="1.10.287.3980">
    <property type="match status" value="1"/>
</dbReference>
<dbReference type="HAMAP" id="MF_00391">
    <property type="entry name" value="Ribosomal_bL34"/>
    <property type="match status" value="1"/>
</dbReference>
<dbReference type="InterPro" id="IPR000271">
    <property type="entry name" value="Ribosomal_bL34"/>
</dbReference>
<dbReference type="InterPro" id="IPR020939">
    <property type="entry name" value="Ribosomal_bL34_CS"/>
</dbReference>
<dbReference type="NCBIfam" id="TIGR01030">
    <property type="entry name" value="rpmH_bact"/>
    <property type="match status" value="1"/>
</dbReference>
<dbReference type="PANTHER" id="PTHR14503:SF4">
    <property type="entry name" value="LARGE RIBOSOMAL SUBUNIT PROTEIN BL34M"/>
    <property type="match status" value="1"/>
</dbReference>
<dbReference type="PANTHER" id="PTHR14503">
    <property type="entry name" value="MITOCHONDRIAL RIBOSOMAL PROTEIN 34 FAMILY MEMBER"/>
    <property type="match status" value="1"/>
</dbReference>
<dbReference type="Pfam" id="PF00468">
    <property type="entry name" value="Ribosomal_L34"/>
    <property type="match status" value="1"/>
</dbReference>
<dbReference type="PROSITE" id="PS00784">
    <property type="entry name" value="RIBOSOMAL_L34"/>
    <property type="match status" value="1"/>
</dbReference>
<protein>
    <recommendedName>
        <fullName evidence="1">Large ribosomal subunit protein bL34</fullName>
    </recommendedName>
    <alternativeName>
        <fullName evidence="3">50S ribosomal protein L34</fullName>
    </alternativeName>
</protein>